<reference key="1">
    <citation type="submission" date="2006-06" db="EMBL/GenBank/DDBJ databases">
        <title>Complete sequence of Rubrobacter xylanophilus DSM 9941.</title>
        <authorList>
            <consortium name="US DOE Joint Genome Institute"/>
            <person name="Copeland A."/>
            <person name="Lucas S."/>
            <person name="Lapidus A."/>
            <person name="Barry K."/>
            <person name="Detter J.C."/>
            <person name="Glavina del Rio T."/>
            <person name="Hammon N."/>
            <person name="Israni S."/>
            <person name="Dalin E."/>
            <person name="Tice H."/>
            <person name="Pitluck S."/>
            <person name="Munk A.C."/>
            <person name="Brettin T."/>
            <person name="Bruce D."/>
            <person name="Han C."/>
            <person name="Tapia R."/>
            <person name="Gilna P."/>
            <person name="Schmutz J."/>
            <person name="Larimer F."/>
            <person name="Land M."/>
            <person name="Hauser L."/>
            <person name="Kyrpides N."/>
            <person name="Lykidis A."/>
            <person name="da Costa M.S."/>
            <person name="Rainey F.A."/>
            <person name="Empadinhas N."/>
            <person name="Jolivet E."/>
            <person name="Battista J.R."/>
            <person name="Richardson P."/>
        </authorList>
    </citation>
    <scope>NUCLEOTIDE SEQUENCE [LARGE SCALE GENOMIC DNA]</scope>
    <source>
        <strain>DSM 9941 / JCM 11954 / NBRC 16129 / PRD-1</strain>
    </source>
</reference>
<organism>
    <name type="scientific">Rubrobacter xylanophilus (strain DSM 9941 / JCM 11954 / NBRC 16129 / PRD-1)</name>
    <dbReference type="NCBI Taxonomy" id="266117"/>
    <lineage>
        <taxon>Bacteria</taxon>
        <taxon>Bacillati</taxon>
        <taxon>Actinomycetota</taxon>
        <taxon>Rubrobacteria</taxon>
        <taxon>Rubrobacterales</taxon>
        <taxon>Rubrobacteraceae</taxon>
        <taxon>Rubrobacter</taxon>
    </lineage>
</organism>
<evidence type="ECO:0000255" key="1">
    <source>
        <dbReference type="HAMAP-Rule" id="MF_00107"/>
    </source>
</evidence>
<comment type="function">
    <text evidence="1">Involved in the biosynthesis of isopentenyl diphosphate (IPP) and dimethylallyl diphosphate (DMAPP), two major building blocks of isoprenoid compounds. Catalyzes the conversion of 4-diphosphocytidyl-2-C-methyl-D-erythritol 2-phosphate (CDP-ME2P) to 2-C-methyl-D-erythritol 2,4-cyclodiphosphate (ME-CPP) with a corresponding release of cytidine 5-monophosphate (CMP).</text>
</comment>
<comment type="catalytic activity">
    <reaction evidence="1">
        <text>4-CDP-2-C-methyl-D-erythritol 2-phosphate = 2-C-methyl-D-erythritol 2,4-cyclic diphosphate + CMP</text>
        <dbReference type="Rhea" id="RHEA:23864"/>
        <dbReference type="ChEBI" id="CHEBI:57919"/>
        <dbReference type="ChEBI" id="CHEBI:58483"/>
        <dbReference type="ChEBI" id="CHEBI:60377"/>
        <dbReference type="EC" id="4.6.1.12"/>
    </reaction>
</comment>
<comment type="cofactor">
    <cofactor evidence="1">
        <name>a divalent metal cation</name>
        <dbReference type="ChEBI" id="CHEBI:60240"/>
    </cofactor>
    <text evidence="1">Binds 1 divalent metal cation per subunit.</text>
</comment>
<comment type="pathway">
    <text evidence="1">Isoprenoid biosynthesis; isopentenyl diphosphate biosynthesis via DXP pathway; isopentenyl diphosphate from 1-deoxy-D-xylulose 5-phosphate: step 4/6.</text>
</comment>
<comment type="subunit">
    <text evidence="1">Homotrimer.</text>
</comment>
<comment type="similarity">
    <text evidence="1">Belongs to the IspF family.</text>
</comment>
<proteinExistence type="inferred from homology"/>
<sequence length="165" mass="17738">MGGYRVGLGVDVHAFADPAEGRQLVLGGVRIPSERGLRGHSDADVLAHAVTDALLGAAGLEDIGHYFPDTDERFRDADSIWLLREARRIVGGGWEVVNVDAVVICERPRIREHREKMRENLAAALGVEASRVSVRGTTSERLGFTGRGEGIAAQAVCLLERAVGT</sequence>
<keyword id="KW-0414">Isoprene biosynthesis</keyword>
<keyword id="KW-0456">Lyase</keyword>
<keyword id="KW-0479">Metal-binding</keyword>
<keyword id="KW-1185">Reference proteome</keyword>
<name>ISPF_RUBXD</name>
<accession>Q1AU09</accession>
<protein>
    <recommendedName>
        <fullName evidence="1">2-C-methyl-D-erythritol 2,4-cyclodiphosphate synthase</fullName>
        <shortName evidence="1">MECDP-synthase</shortName>
        <shortName evidence="1">MECPP-synthase</shortName>
        <shortName evidence="1">MECPS</shortName>
        <ecNumber evidence="1">4.6.1.12</ecNumber>
    </recommendedName>
</protein>
<dbReference type="EC" id="4.6.1.12" evidence="1"/>
<dbReference type="EMBL" id="CP000386">
    <property type="protein sequence ID" value="ABG05119.1"/>
    <property type="molecule type" value="Genomic_DNA"/>
</dbReference>
<dbReference type="RefSeq" id="WP_011565133.1">
    <property type="nucleotide sequence ID" value="NC_008148.1"/>
</dbReference>
<dbReference type="SMR" id="Q1AU09"/>
<dbReference type="STRING" id="266117.Rxyl_2175"/>
<dbReference type="KEGG" id="rxy:Rxyl_2175"/>
<dbReference type="eggNOG" id="COG0245">
    <property type="taxonomic scope" value="Bacteria"/>
</dbReference>
<dbReference type="HOGENOM" id="CLU_084630_2_0_11"/>
<dbReference type="OrthoDB" id="9804336at2"/>
<dbReference type="PhylomeDB" id="Q1AU09"/>
<dbReference type="UniPathway" id="UPA00056">
    <property type="reaction ID" value="UER00095"/>
</dbReference>
<dbReference type="Proteomes" id="UP000006637">
    <property type="component" value="Chromosome"/>
</dbReference>
<dbReference type="GO" id="GO:0008685">
    <property type="term" value="F:2-C-methyl-D-erythritol 2,4-cyclodiphosphate synthase activity"/>
    <property type="evidence" value="ECO:0007669"/>
    <property type="project" value="UniProtKB-UniRule"/>
</dbReference>
<dbReference type="GO" id="GO:0046872">
    <property type="term" value="F:metal ion binding"/>
    <property type="evidence" value="ECO:0007669"/>
    <property type="project" value="UniProtKB-KW"/>
</dbReference>
<dbReference type="GO" id="GO:0019288">
    <property type="term" value="P:isopentenyl diphosphate biosynthetic process, methylerythritol 4-phosphate pathway"/>
    <property type="evidence" value="ECO:0007669"/>
    <property type="project" value="UniProtKB-UniRule"/>
</dbReference>
<dbReference type="GO" id="GO:0016114">
    <property type="term" value="P:terpenoid biosynthetic process"/>
    <property type="evidence" value="ECO:0007669"/>
    <property type="project" value="InterPro"/>
</dbReference>
<dbReference type="CDD" id="cd00554">
    <property type="entry name" value="MECDP_synthase"/>
    <property type="match status" value="1"/>
</dbReference>
<dbReference type="FunFam" id="3.30.1330.50:FF:000003">
    <property type="entry name" value="2-C-methyl-D-erythritol 2,4-cyclodiphosphate synthase"/>
    <property type="match status" value="1"/>
</dbReference>
<dbReference type="Gene3D" id="3.30.1330.50">
    <property type="entry name" value="2-C-methyl-D-erythritol 2,4-cyclodiphosphate synthase"/>
    <property type="match status" value="1"/>
</dbReference>
<dbReference type="HAMAP" id="MF_00107">
    <property type="entry name" value="IspF"/>
    <property type="match status" value="1"/>
</dbReference>
<dbReference type="InterPro" id="IPR003526">
    <property type="entry name" value="MECDP_synthase"/>
</dbReference>
<dbReference type="InterPro" id="IPR020555">
    <property type="entry name" value="MECDP_synthase_CS"/>
</dbReference>
<dbReference type="InterPro" id="IPR036571">
    <property type="entry name" value="MECDP_synthase_sf"/>
</dbReference>
<dbReference type="NCBIfam" id="TIGR00151">
    <property type="entry name" value="ispF"/>
    <property type="match status" value="1"/>
</dbReference>
<dbReference type="PANTHER" id="PTHR43181">
    <property type="entry name" value="2-C-METHYL-D-ERYTHRITOL 2,4-CYCLODIPHOSPHATE SYNTHASE, CHLOROPLASTIC"/>
    <property type="match status" value="1"/>
</dbReference>
<dbReference type="PANTHER" id="PTHR43181:SF1">
    <property type="entry name" value="2-C-METHYL-D-ERYTHRITOL 2,4-CYCLODIPHOSPHATE SYNTHASE, CHLOROPLASTIC"/>
    <property type="match status" value="1"/>
</dbReference>
<dbReference type="Pfam" id="PF02542">
    <property type="entry name" value="YgbB"/>
    <property type="match status" value="1"/>
</dbReference>
<dbReference type="SUPFAM" id="SSF69765">
    <property type="entry name" value="IpsF-like"/>
    <property type="match status" value="1"/>
</dbReference>
<dbReference type="PROSITE" id="PS01350">
    <property type="entry name" value="ISPF"/>
    <property type="match status" value="1"/>
</dbReference>
<feature type="chain" id="PRO_1000022873" description="2-C-methyl-D-erythritol 2,4-cyclodiphosphate synthase">
    <location>
        <begin position="1"/>
        <end position="165"/>
    </location>
</feature>
<feature type="binding site" evidence="1">
    <location>
        <begin position="11"/>
        <end position="13"/>
    </location>
    <ligand>
        <name>4-CDP-2-C-methyl-D-erythritol 2-phosphate</name>
        <dbReference type="ChEBI" id="CHEBI:57919"/>
    </ligand>
</feature>
<feature type="binding site" evidence="1">
    <location>
        <position position="11"/>
    </location>
    <ligand>
        <name>a divalent metal cation</name>
        <dbReference type="ChEBI" id="CHEBI:60240"/>
    </ligand>
</feature>
<feature type="binding site" evidence="1">
    <location>
        <position position="13"/>
    </location>
    <ligand>
        <name>a divalent metal cation</name>
        <dbReference type="ChEBI" id="CHEBI:60240"/>
    </ligand>
</feature>
<feature type="binding site" evidence="1">
    <location>
        <begin position="40"/>
        <end position="41"/>
    </location>
    <ligand>
        <name>4-CDP-2-C-methyl-D-erythritol 2-phosphate</name>
        <dbReference type="ChEBI" id="CHEBI:57919"/>
    </ligand>
</feature>
<feature type="binding site" evidence="1">
    <location>
        <position position="48"/>
    </location>
    <ligand>
        <name>a divalent metal cation</name>
        <dbReference type="ChEBI" id="CHEBI:60240"/>
    </ligand>
</feature>
<feature type="binding site" evidence="1">
    <location>
        <begin position="62"/>
        <end position="64"/>
    </location>
    <ligand>
        <name>4-CDP-2-C-methyl-D-erythritol 2-phosphate</name>
        <dbReference type="ChEBI" id="CHEBI:57919"/>
    </ligand>
</feature>
<feature type="binding site" evidence="1">
    <location>
        <begin position="67"/>
        <end position="71"/>
    </location>
    <ligand>
        <name>4-CDP-2-C-methyl-D-erythritol 2-phosphate</name>
        <dbReference type="ChEBI" id="CHEBI:57919"/>
    </ligand>
</feature>
<feature type="binding site" evidence="1">
    <location>
        <begin position="137"/>
        <end position="140"/>
    </location>
    <ligand>
        <name>4-CDP-2-C-methyl-D-erythritol 2-phosphate</name>
        <dbReference type="ChEBI" id="CHEBI:57919"/>
    </ligand>
</feature>
<feature type="binding site" evidence="1">
    <location>
        <position position="144"/>
    </location>
    <ligand>
        <name>4-CDP-2-C-methyl-D-erythritol 2-phosphate</name>
        <dbReference type="ChEBI" id="CHEBI:57919"/>
    </ligand>
</feature>
<feature type="binding site" evidence="1">
    <location>
        <position position="147"/>
    </location>
    <ligand>
        <name>4-CDP-2-C-methyl-D-erythritol 2-phosphate</name>
        <dbReference type="ChEBI" id="CHEBI:57919"/>
    </ligand>
</feature>
<feature type="site" description="Transition state stabilizer" evidence="1">
    <location>
        <position position="40"/>
    </location>
</feature>
<feature type="site" description="Transition state stabilizer" evidence="1">
    <location>
        <position position="138"/>
    </location>
</feature>
<gene>
    <name evidence="1" type="primary">ispF</name>
    <name type="ordered locus">Rxyl_2175</name>
</gene>